<proteinExistence type="evidence at protein level"/>
<feature type="signal peptide" evidence="4">
    <location>
        <begin position="1"/>
        <end status="unknown"/>
    </location>
</feature>
<feature type="propeptide" id="PRO_0000022988" evidence="4">
    <location>
        <begin status="unknown"/>
        <end position="31"/>
    </location>
</feature>
<feature type="chain" id="PRO_0000022989" description="Imperatoxin-1 large subunit">
    <location>
        <begin position="32"/>
        <end position="135"/>
    </location>
</feature>
<feature type="propeptide" id="PRO_0000022990" evidence="6">
    <location>
        <begin position="136"/>
        <end position="140"/>
    </location>
</feature>
<feature type="chain" id="PRO_0000022991" description="Imperatoxin-1 small subunit">
    <location>
        <begin position="141"/>
        <end position="167"/>
    </location>
</feature>
<feature type="active site" evidence="5">
    <location>
        <position position="64"/>
    </location>
</feature>
<feature type="binding site" evidence="2">
    <location>
        <position position="38"/>
    </location>
    <ligand>
        <name>Ca(2+)</name>
        <dbReference type="ChEBI" id="CHEBI:29108"/>
    </ligand>
</feature>
<feature type="binding site" evidence="2">
    <location>
        <position position="40"/>
    </location>
    <ligand>
        <name>Ca(2+)</name>
        <dbReference type="ChEBI" id="CHEBI:29108"/>
    </ligand>
</feature>
<feature type="binding site" evidence="2">
    <location>
        <position position="42"/>
    </location>
    <ligand>
        <name>Ca(2+)</name>
        <dbReference type="ChEBI" id="CHEBI:29108"/>
    </ligand>
</feature>
<feature type="binding site" evidence="2">
    <location>
        <position position="65"/>
    </location>
    <ligand>
        <name>Ca(2+)</name>
        <dbReference type="ChEBI" id="CHEBI:29108"/>
    </ligand>
</feature>
<feature type="glycosylation site" description="N-linked (GlcNAc...) asparagine" evidence="4">
    <location>
        <position position="102"/>
    </location>
</feature>
<feature type="disulfide bond" evidence="3">
    <location>
        <begin position="39"/>
        <end position="61"/>
    </location>
</feature>
<feature type="disulfide bond" evidence="3">
    <location>
        <begin position="60"/>
        <end position="99"/>
    </location>
</feature>
<feature type="disulfide bond" evidence="3">
    <location>
        <begin position="67"/>
        <end position="92"/>
    </location>
</feature>
<feature type="disulfide bond" evidence="3">
    <location>
        <begin position="90"/>
        <end position="127"/>
    </location>
</feature>
<feature type="disulfide bond" description="Interchain (between large and small subunits)" evidence="3">
    <location>
        <begin position="132"/>
        <end position="144"/>
    </location>
</feature>
<feature type="mutagenesis site" description="Does not affect the binding of ryanodine to cardiac ryanodine receptor." evidence="6">
    <original>C</original>
    <variation>M</variation>
    <variation>A</variation>
    <location>
        <position position="144"/>
    </location>
</feature>
<protein>
    <recommendedName>
        <fullName>Phospholipase A2 imperatoxin-1</fullName>
    </recommendedName>
    <alternativeName>
        <fullName>Imperatoxin I</fullName>
        <shortName>IpTx1</shortName>
        <shortName>IpTxi</shortName>
    </alternativeName>
    <alternativeName>
        <fullName>Imperatoxin inhibitor</fullName>
    </alternativeName>
    <component>
        <recommendedName>
            <fullName>Imperatoxin-1 large subunit</fullName>
            <ecNumber>3.1.1.4</ecNumber>
        </recommendedName>
        <alternativeName>
            <fullName>Imperatoxin I large subunit</fullName>
        </alternativeName>
    </component>
    <component>
        <recommendedName>
            <fullName>Imperatoxin-1 small subunit</fullName>
        </recommendedName>
        <alternativeName>
            <fullName>Imperatoxin I small subunit</fullName>
        </alternativeName>
    </component>
</protein>
<reference key="1">
    <citation type="journal article" date="1997" name="J. Biol. Chem.">
        <title>The mechanism of inhibition of ryanodine receptor channels by imperatoxin I, a heterodimeric protein from the scorpion Pandinus imperator.</title>
        <authorList>
            <person name="Zamudio F.Z."/>
            <person name="Conde R."/>
            <person name="Arevalo C."/>
            <person name="Becerril B."/>
            <person name="Martin B.M."/>
            <person name="Valdivia H.H."/>
            <person name="Possani L.D."/>
        </authorList>
    </citation>
    <scope>NUCLEOTIDE SEQUENCE [MRNA]</scope>
    <scope>PROTEIN SEQUENCE OF 32-135 AND 141-167</scope>
    <scope>SUBUNIT</scope>
    <scope>FUNCTION</scope>
    <scope>MUTAGENESIS OF CYS-144</scope>
    <source>
        <tissue>Venom</tissue>
        <tissue>Venom gland</tissue>
    </source>
</reference>
<reference key="2">
    <citation type="journal article" date="1992" name="Proc. Natl. Acad. Sci. U.S.A.">
        <title>Scorpion toxins targeted against the sarcoplasmic reticulum Ca(2+)-release channel of skeletal and cardiac muscle.</title>
        <authorList>
            <person name="Valdivia H.H."/>
            <person name="Kirby M.S."/>
            <person name="Lederer W.J."/>
            <person name="Coronado R."/>
        </authorList>
    </citation>
    <scope>IDENTIFICATION</scope>
</reference>
<organism>
    <name type="scientific">Pandinus imperator</name>
    <name type="common">Emperor scorpion</name>
    <dbReference type="NCBI Taxonomy" id="55084"/>
    <lineage>
        <taxon>Eukaryota</taxon>
        <taxon>Metazoa</taxon>
        <taxon>Ecdysozoa</taxon>
        <taxon>Arthropoda</taxon>
        <taxon>Chelicerata</taxon>
        <taxon>Arachnida</taxon>
        <taxon>Scorpiones</taxon>
        <taxon>Iurida</taxon>
        <taxon>Scorpionoidea</taxon>
        <taxon>Scorpionidae</taxon>
        <taxon>Pandininae</taxon>
        <taxon>Pandinus</taxon>
    </lineage>
</organism>
<sequence length="167" mass="18664">MHTPKHAIQRISKEEMEFFEGRCERMGEADETMWGTKWCGSGNEATDISELGYWSNLDSCCRTHDHCDNIPSGQTKYGLTNEGKYTMMNCKCETAFEQCLRNVTGGMEGPAAGFVRKTYFDLYGNGCYNVQCPSQRRLARSEECPDGVATYTGEAGYGAWAINKLNG</sequence>
<accession>P59888</accession>
<evidence type="ECO:0000250" key="1"/>
<evidence type="ECO:0000250" key="2">
    <source>
        <dbReference type="UniProtKB" id="P00630"/>
    </source>
</evidence>
<evidence type="ECO:0000250" key="3">
    <source>
        <dbReference type="UniProtKB" id="Q6T178"/>
    </source>
</evidence>
<evidence type="ECO:0000255" key="4"/>
<evidence type="ECO:0000255" key="5">
    <source>
        <dbReference type="PROSITE-ProRule" id="PRU10035"/>
    </source>
</evidence>
<evidence type="ECO:0000269" key="6">
    <source>
    </source>
</evidence>
<evidence type="ECO:0000305" key="7"/>
<keyword id="KW-0106">Calcium</keyword>
<keyword id="KW-0108">Calcium channel impairing toxin</keyword>
<keyword id="KW-0903">Direct protein sequencing</keyword>
<keyword id="KW-1015">Disulfide bond</keyword>
<keyword id="KW-0325">Glycoprotein</keyword>
<keyword id="KW-0378">Hydrolase</keyword>
<keyword id="KW-0872">Ion channel impairing toxin</keyword>
<keyword id="KW-0442">Lipid degradation</keyword>
<keyword id="KW-0443">Lipid metabolism</keyword>
<keyword id="KW-0479">Metal-binding</keyword>
<keyword id="KW-0528">Neurotoxin</keyword>
<keyword id="KW-1219">Ryanodine-sensitive calcium-release channel impairing toxin</keyword>
<keyword id="KW-0964">Secreted</keyword>
<keyword id="KW-0732">Signal</keyword>
<keyword id="KW-0800">Toxin</keyword>
<keyword id="KW-0865">Zymogen</keyword>
<dbReference type="EC" id="3.1.1.4"/>
<dbReference type="SMR" id="P59888"/>
<dbReference type="GO" id="GO:0005576">
    <property type="term" value="C:extracellular region"/>
    <property type="evidence" value="ECO:0007669"/>
    <property type="project" value="UniProtKB-SubCell"/>
</dbReference>
<dbReference type="GO" id="GO:0005246">
    <property type="term" value="F:calcium channel regulator activity"/>
    <property type="evidence" value="ECO:0007669"/>
    <property type="project" value="UniProtKB-KW"/>
</dbReference>
<dbReference type="GO" id="GO:0046872">
    <property type="term" value="F:metal ion binding"/>
    <property type="evidence" value="ECO:0007669"/>
    <property type="project" value="UniProtKB-KW"/>
</dbReference>
<dbReference type="GO" id="GO:0004623">
    <property type="term" value="F:phospholipase A2 activity"/>
    <property type="evidence" value="ECO:0007669"/>
    <property type="project" value="UniProtKB-EC"/>
</dbReference>
<dbReference type="GO" id="GO:0090729">
    <property type="term" value="F:toxin activity"/>
    <property type="evidence" value="ECO:0007669"/>
    <property type="project" value="UniProtKB-KW"/>
</dbReference>
<dbReference type="GO" id="GO:0050482">
    <property type="term" value="P:arachidonate secretion"/>
    <property type="evidence" value="ECO:0007669"/>
    <property type="project" value="InterPro"/>
</dbReference>
<dbReference type="GO" id="GO:0016042">
    <property type="term" value="P:lipid catabolic process"/>
    <property type="evidence" value="ECO:0007669"/>
    <property type="project" value="UniProtKB-KW"/>
</dbReference>
<dbReference type="GO" id="GO:0006644">
    <property type="term" value="P:phospholipid metabolic process"/>
    <property type="evidence" value="ECO:0007669"/>
    <property type="project" value="InterPro"/>
</dbReference>
<dbReference type="CDD" id="cd04704">
    <property type="entry name" value="PLA2_bee_venom_like"/>
    <property type="match status" value="1"/>
</dbReference>
<dbReference type="Gene3D" id="1.20.90.10">
    <property type="entry name" value="Phospholipase A2 domain"/>
    <property type="match status" value="1"/>
</dbReference>
<dbReference type="InterPro" id="IPR016090">
    <property type="entry name" value="PLipase_A2_dom"/>
</dbReference>
<dbReference type="InterPro" id="IPR036444">
    <property type="entry name" value="PLipase_A2_dom_sf"/>
</dbReference>
<dbReference type="InterPro" id="IPR033113">
    <property type="entry name" value="PLipase_A2_His_AS"/>
</dbReference>
<dbReference type="PANTHER" id="PTHR12253">
    <property type="entry name" value="RH14732P"/>
    <property type="match status" value="1"/>
</dbReference>
<dbReference type="Pfam" id="PF05826">
    <property type="entry name" value="Phospholip_A2_2"/>
    <property type="match status" value="1"/>
</dbReference>
<dbReference type="SUPFAM" id="SSF48619">
    <property type="entry name" value="Phospholipase A2, PLA2"/>
    <property type="match status" value="1"/>
</dbReference>
<dbReference type="PROSITE" id="PS00118">
    <property type="entry name" value="PA2_HIS"/>
    <property type="match status" value="1"/>
</dbReference>
<comment type="function">
    <text evidence="6">Phospholipase toxin, which may catalyze the calcium-dependent hydrolysis of the 2-acyl groups in 3-sn-phosphoglycerides. Inhibits both skeletal (RYR1) and cardiac (RYR2) ryanodine receptors (calcium release channels). Probably blocks ryanodine receptors by generating a lipid product.</text>
</comment>
<comment type="catalytic activity">
    <reaction evidence="5">
        <text>a 1,2-diacyl-sn-glycero-3-phosphocholine + H2O = a 1-acyl-sn-glycero-3-phosphocholine + a fatty acid + H(+)</text>
        <dbReference type="Rhea" id="RHEA:15801"/>
        <dbReference type="ChEBI" id="CHEBI:15377"/>
        <dbReference type="ChEBI" id="CHEBI:15378"/>
        <dbReference type="ChEBI" id="CHEBI:28868"/>
        <dbReference type="ChEBI" id="CHEBI:57643"/>
        <dbReference type="ChEBI" id="CHEBI:58168"/>
        <dbReference type="EC" id="3.1.1.4"/>
    </reaction>
</comment>
<comment type="cofactor">
    <cofactor evidence="1">
        <name>Ca(2+)</name>
        <dbReference type="ChEBI" id="CHEBI:29108"/>
    </cofactor>
    <text evidence="1">Binds 1 Ca(2+) ion.</text>
</comment>
<comment type="subunit">
    <text evidence="6">Heterodimer composed of a large subunit and a small subunit; disulfide-linked.</text>
</comment>
<comment type="subcellular location">
    <subcellularLocation>
        <location>Secreted</location>
    </subcellularLocation>
</comment>
<comment type="tissue specificity">
    <text>Expressed by the venom gland.</text>
</comment>
<comment type="similarity">
    <text evidence="7">Belongs to the phospholipase A2 family. Group III subfamily.</text>
</comment>
<comment type="caution">
    <text evidence="7">In contrast to other phospholipases, it lacks the typical Asp active site (Asp-&gt;Glu in position 93).</text>
</comment>
<name>IPTXI_PANIM</name>